<name>Y467_MYCLE</name>
<sequence length="214" mass="23114">MDVDALLQSIPPLAVYLLVSGVVGVESLGIPLPGEVVLVSAALLSSRHDLAVSSIGVGVVAVIGAAVGDSIGYAIGRRFGMPLFDHLGRRFPKHFGPGHVALVERLFNRWGVRAVFFGRFIALLRILAGPLAGALKMHYPRFLAANVSGAICWAGGTTALVYFAGMAAERWMERFSWIALIITVVVGIIAAILLRERTSRIIAELEMEYKNRRH</sequence>
<feature type="chain" id="PRO_0000161429" description="Uncharacterized membrane protein ML0467">
    <location>
        <begin position="1"/>
        <end position="214"/>
    </location>
</feature>
<feature type="transmembrane region" description="Helical" evidence="1">
    <location>
        <begin position="10"/>
        <end position="30"/>
    </location>
</feature>
<feature type="transmembrane region" description="Helical" evidence="1">
    <location>
        <begin position="55"/>
        <end position="75"/>
    </location>
</feature>
<feature type="transmembrane region" description="Helical" evidence="1">
    <location>
        <begin position="147"/>
        <end position="167"/>
    </location>
</feature>
<feature type="transmembrane region" description="Helical" evidence="1">
    <location>
        <begin position="174"/>
        <end position="194"/>
    </location>
</feature>
<comment type="subcellular location">
    <subcellularLocation>
        <location evidence="2">Cell membrane</location>
        <topology evidence="2">Multi-pass membrane protein</topology>
    </subcellularLocation>
</comment>
<comment type="similarity">
    <text evidence="2">Belongs to the DedA family.</text>
</comment>
<comment type="sequence caution" evidence="2">
    <conflict type="frameshift">
        <sequence resource="EMBL-CDS" id="AAA17083"/>
    </conflict>
</comment>
<proteinExistence type="inferred from homology"/>
<dbReference type="EMBL" id="U00011">
    <property type="protein sequence ID" value="AAA17091.1"/>
    <property type="status" value="ALT_FRAME"/>
    <property type="molecule type" value="Genomic_DNA"/>
</dbReference>
<dbReference type="EMBL" id="U00011">
    <property type="protein sequence ID" value="AAA17083.1"/>
    <property type="status" value="ALT_FRAME"/>
    <property type="molecule type" value="Genomic_DNA"/>
</dbReference>
<dbReference type="EMBL" id="Z96801">
    <property type="protein sequence ID" value="CAB09615.1"/>
    <property type="molecule type" value="Genomic_DNA"/>
</dbReference>
<dbReference type="EMBL" id="AL583918">
    <property type="protein sequence ID" value="CAC29975.1"/>
    <property type="molecule type" value="Genomic_DNA"/>
</dbReference>
<dbReference type="PIR" id="C86967">
    <property type="entry name" value="C86967"/>
</dbReference>
<dbReference type="PIR" id="S72719">
    <property type="entry name" value="S72719"/>
</dbReference>
<dbReference type="PIR" id="S72727">
    <property type="entry name" value="S72727"/>
</dbReference>
<dbReference type="RefSeq" id="NP_301414.1">
    <property type="nucleotide sequence ID" value="NC_002677.1"/>
</dbReference>
<dbReference type="RefSeq" id="WP_010907738.1">
    <property type="nucleotide sequence ID" value="NC_002677.1"/>
</dbReference>
<dbReference type="KEGG" id="mle:ML0467"/>
<dbReference type="PATRIC" id="fig|272631.5.peg.814"/>
<dbReference type="Leproma" id="ML0467"/>
<dbReference type="eggNOG" id="COG0586">
    <property type="taxonomic scope" value="Bacteria"/>
</dbReference>
<dbReference type="HOGENOM" id="CLU_044208_4_0_11"/>
<dbReference type="OrthoDB" id="9813426at2"/>
<dbReference type="Proteomes" id="UP000000806">
    <property type="component" value="Chromosome"/>
</dbReference>
<dbReference type="GO" id="GO:0005886">
    <property type="term" value="C:plasma membrane"/>
    <property type="evidence" value="ECO:0007669"/>
    <property type="project" value="UniProtKB-SubCell"/>
</dbReference>
<dbReference type="InterPro" id="IPR051311">
    <property type="entry name" value="DedA_domain"/>
</dbReference>
<dbReference type="InterPro" id="IPR032816">
    <property type="entry name" value="VTT_dom"/>
</dbReference>
<dbReference type="PANTHER" id="PTHR42709">
    <property type="entry name" value="ALKALINE PHOSPHATASE LIKE PROTEIN"/>
    <property type="match status" value="1"/>
</dbReference>
<dbReference type="PANTHER" id="PTHR42709:SF6">
    <property type="entry name" value="UNDECAPRENYL PHOSPHATE TRANSPORTER A"/>
    <property type="match status" value="1"/>
</dbReference>
<dbReference type="Pfam" id="PF09335">
    <property type="entry name" value="VTT_dom"/>
    <property type="match status" value="1"/>
</dbReference>
<evidence type="ECO:0000255" key="1"/>
<evidence type="ECO:0000305" key="2"/>
<reference key="1">
    <citation type="submission" date="1994-03" db="EMBL/GenBank/DDBJ databases">
        <authorList>
            <person name="Smith D.R."/>
            <person name="Robison K."/>
        </authorList>
    </citation>
    <scope>NUCLEOTIDE SEQUENCE [GENOMIC DNA]</scope>
</reference>
<reference key="2">
    <citation type="journal article" date="2001" name="Nature">
        <title>Massive gene decay in the leprosy bacillus.</title>
        <authorList>
            <person name="Cole S.T."/>
            <person name="Eiglmeier K."/>
            <person name="Parkhill J."/>
            <person name="James K.D."/>
            <person name="Thomson N.R."/>
            <person name="Wheeler P.R."/>
            <person name="Honore N."/>
            <person name="Garnier T."/>
            <person name="Churcher C.M."/>
            <person name="Harris D.E."/>
            <person name="Mungall K.L."/>
            <person name="Basham D."/>
            <person name="Brown D."/>
            <person name="Chillingworth T."/>
            <person name="Connor R."/>
            <person name="Davies R.M."/>
            <person name="Devlin K."/>
            <person name="Duthoy S."/>
            <person name="Feltwell T."/>
            <person name="Fraser A."/>
            <person name="Hamlin N."/>
            <person name="Holroyd S."/>
            <person name="Hornsby T."/>
            <person name="Jagels K."/>
            <person name="Lacroix C."/>
            <person name="Maclean J."/>
            <person name="Moule S."/>
            <person name="Murphy L.D."/>
            <person name="Oliver K."/>
            <person name="Quail M.A."/>
            <person name="Rajandream M.A."/>
            <person name="Rutherford K.M."/>
            <person name="Rutter S."/>
            <person name="Seeger K."/>
            <person name="Simon S."/>
            <person name="Simmonds M."/>
            <person name="Skelton J."/>
            <person name="Squares R."/>
            <person name="Squares S."/>
            <person name="Stevens K."/>
            <person name="Taylor K."/>
            <person name="Whitehead S."/>
            <person name="Woodward J.R."/>
            <person name="Barrell B.G."/>
        </authorList>
    </citation>
    <scope>NUCLEOTIDE SEQUENCE [LARGE SCALE GENOMIC DNA]</scope>
    <source>
        <strain>TN</strain>
    </source>
</reference>
<accession>Q49642</accession>
<accession>Q49635</accession>
<keyword id="KW-1003">Cell membrane</keyword>
<keyword id="KW-0472">Membrane</keyword>
<keyword id="KW-1185">Reference proteome</keyword>
<keyword id="KW-0812">Transmembrane</keyword>
<keyword id="KW-1133">Transmembrane helix</keyword>
<protein>
    <recommendedName>
        <fullName>Uncharacterized membrane protein ML0467</fullName>
    </recommendedName>
</protein>
<organism>
    <name type="scientific">Mycobacterium leprae (strain TN)</name>
    <dbReference type="NCBI Taxonomy" id="272631"/>
    <lineage>
        <taxon>Bacteria</taxon>
        <taxon>Bacillati</taxon>
        <taxon>Actinomycetota</taxon>
        <taxon>Actinomycetes</taxon>
        <taxon>Mycobacteriales</taxon>
        <taxon>Mycobacteriaceae</taxon>
        <taxon>Mycobacterium</taxon>
    </lineage>
</organism>
<gene>
    <name type="ordered locus">ML0467</name>
    <name type="ORF">B1177_C2_172/B1177_C1_140</name>
    <name type="ORF">MLCL581.27</name>
</gene>